<proteinExistence type="inferred from homology"/>
<comment type="function">
    <text evidence="1">Photosystem II (PSII) is a light-driven water:plastoquinone oxidoreductase that uses light energy to abstract electrons from H(2)O, generating O(2) and a proton gradient subsequently used for ATP formation. It consists of a core antenna complex that captures photons, and an electron transfer chain that converts photonic excitation into a charge separation. The D1/D2 (PsbA/PsbD) reaction center heterodimer binds P680, the primary electron donor of PSII as well as several subsequent electron acceptors.</text>
</comment>
<comment type="catalytic activity">
    <reaction evidence="1">
        <text>2 a plastoquinone + 4 hnu + 2 H2O = 2 a plastoquinol + O2</text>
        <dbReference type="Rhea" id="RHEA:36359"/>
        <dbReference type="Rhea" id="RHEA-COMP:9561"/>
        <dbReference type="Rhea" id="RHEA-COMP:9562"/>
        <dbReference type="ChEBI" id="CHEBI:15377"/>
        <dbReference type="ChEBI" id="CHEBI:15379"/>
        <dbReference type="ChEBI" id="CHEBI:17757"/>
        <dbReference type="ChEBI" id="CHEBI:30212"/>
        <dbReference type="ChEBI" id="CHEBI:62192"/>
        <dbReference type="EC" id="1.10.3.9"/>
    </reaction>
</comment>
<comment type="cofactor">
    <text evidence="1">The D1/D2 heterodimer binds P680, chlorophylls that are the primary electron donor of PSII, and subsequent electron acceptors. It shares a non-heme iron and each subunit binds pheophytin, quinone, additional chlorophylls, carotenoids and lipids. D1 provides most of the ligands for the Mn4-Ca-O5 cluster of the oxygen-evolving complex (OEC). There is also a Cl(-1) ion associated with D1 and D2, which is required for oxygen evolution. The PSII complex binds additional chlorophylls, carotenoids and specific lipids.</text>
</comment>
<comment type="subunit">
    <text evidence="2">PSII is composed of 1 copy each of membrane proteins PsbA, PsbB, PsbC, PsbD, PsbE, PsbF, PsbH, PsbI, PsbJ, PsbK, PsbL, PsbM, PsbT, PsbX, PsbY, Psb30/Ycf12, peripheral proteins PsbO, CyanoQ (PsbQ), PsbU, PsbV and a large number of cofactors. It forms dimeric complexes.</text>
</comment>
<comment type="subcellular location">
    <subcellularLocation>
        <location evidence="1">Cellular thylakoid membrane</location>
        <topology evidence="1">Multi-pass membrane protein</topology>
    </subcellularLocation>
</comment>
<comment type="PTM">
    <text evidence="1">Tyr-162 forms a radical intermediate that is referred to as redox-active TyrZ, YZ or Y-Z.</text>
</comment>
<comment type="PTM">
    <text evidence="1">C-terminally processed by CtpA; processing is essential to allow assembly of the oxygen-evolving complex and thus photosynthetic growth.</text>
</comment>
<comment type="miscellaneous">
    <text evidence="1">Cyanobacteria usually contain more than 2 copies of the psbA gene.</text>
</comment>
<comment type="miscellaneous">
    <text evidence="1">2 of the reaction center chlorophylls (ChlD1 and ChlD2) are entirely coordinated by water.</text>
</comment>
<comment type="miscellaneous">
    <text evidence="1">Herbicides such as atrazine, BNT, diuron or ioxynil bind in the Q(B) binding site and block subsequent electron transfer.</text>
</comment>
<comment type="similarity">
    <text evidence="1">Belongs to the reaction center PufL/M/PsbA/D family.</text>
</comment>
<protein>
    <recommendedName>
        <fullName evidence="1">Photosystem II protein D1</fullName>
        <shortName evidence="1">PSII D1 protein</shortName>
        <ecNumber evidence="1">1.10.3.9</ecNumber>
    </recommendedName>
    <alternativeName>
        <fullName evidence="1">Photosystem II Q(B) protein</fullName>
    </alternativeName>
</protein>
<keyword id="KW-0106">Calcium</keyword>
<keyword id="KW-0148">Chlorophyll</keyword>
<keyword id="KW-0157">Chromophore</keyword>
<keyword id="KW-0249">Electron transport</keyword>
<keyword id="KW-0359">Herbicide resistance</keyword>
<keyword id="KW-0408">Iron</keyword>
<keyword id="KW-0460">Magnesium</keyword>
<keyword id="KW-0464">Manganese</keyword>
<keyword id="KW-0472">Membrane</keyword>
<keyword id="KW-0479">Metal-binding</keyword>
<keyword id="KW-0560">Oxidoreductase</keyword>
<keyword id="KW-0602">Photosynthesis</keyword>
<keyword id="KW-0604">Photosystem II</keyword>
<keyword id="KW-0793">Thylakoid</keyword>
<keyword id="KW-0812">Transmembrane</keyword>
<keyword id="KW-1133">Transmembrane helix</keyword>
<keyword id="KW-0813">Transport</keyword>
<accession>Q31A92</accession>
<feature type="chain" id="PRO_0000316361" description="Photosystem II protein D1" evidence="1">
    <location>
        <begin position="1"/>
        <end position="345"/>
    </location>
</feature>
<feature type="propeptide" id="PRO_0000316362" evidence="1">
    <location>
        <begin position="346"/>
        <end position="360"/>
    </location>
</feature>
<feature type="transmembrane region" description="Helical" evidence="1">
    <location>
        <begin position="30"/>
        <end position="47"/>
    </location>
</feature>
<feature type="transmembrane region" description="Helical" evidence="1">
    <location>
        <begin position="119"/>
        <end position="134"/>
    </location>
</feature>
<feature type="transmembrane region" description="Helical" evidence="1">
    <location>
        <begin position="143"/>
        <end position="157"/>
    </location>
</feature>
<feature type="transmembrane region" description="Helical" evidence="1">
    <location>
        <begin position="198"/>
        <end position="219"/>
    </location>
</feature>
<feature type="transmembrane region" description="Helical" evidence="1">
    <location>
        <begin position="275"/>
        <end position="289"/>
    </location>
</feature>
<feature type="binding site" description="axial binding residue" evidence="1">
    <location>
        <position position="119"/>
    </location>
    <ligand>
        <name>chlorophyll a</name>
        <dbReference type="ChEBI" id="CHEBI:58416"/>
        <label>ChlzD1</label>
    </ligand>
    <ligandPart>
        <name>Mg</name>
        <dbReference type="ChEBI" id="CHEBI:25107"/>
    </ligandPart>
</feature>
<feature type="binding site" evidence="1">
    <location>
        <position position="127"/>
    </location>
    <ligand>
        <name>pheophytin a</name>
        <dbReference type="ChEBI" id="CHEBI:136840"/>
        <label>D1</label>
    </ligand>
</feature>
<feature type="binding site" evidence="1">
    <location>
        <position position="171"/>
    </location>
    <ligand>
        <name>[CaMn4O5] cluster</name>
        <dbReference type="ChEBI" id="CHEBI:189552"/>
    </ligand>
</feature>
<feature type="binding site" evidence="1">
    <location>
        <position position="190"/>
    </location>
    <ligand>
        <name>[CaMn4O5] cluster</name>
        <dbReference type="ChEBI" id="CHEBI:189552"/>
    </ligand>
</feature>
<feature type="binding site" description="axial binding residue" evidence="1">
    <location>
        <position position="199"/>
    </location>
    <ligand>
        <name>chlorophyll a</name>
        <dbReference type="ChEBI" id="CHEBI:58416"/>
        <label>PD1</label>
    </ligand>
    <ligandPart>
        <name>Mg</name>
        <dbReference type="ChEBI" id="CHEBI:25107"/>
    </ligandPart>
</feature>
<feature type="binding site" evidence="1">
    <location>
        <position position="216"/>
    </location>
    <ligand>
        <name>a quinone</name>
        <dbReference type="ChEBI" id="CHEBI:132124"/>
        <label>B</label>
    </ligand>
</feature>
<feature type="binding site" evidence="1">
    <location>
        <position position="216"/>
    </location>
    <ligand>
        <name>Fe cation</name>
        <dbReference type="ChEBI" id="CHEBI:24875"/>
        <note>ligand shared with heterodimeric partner</note>
    </ligand>
</feature>
<feature type="binding site" evidence="1">
    <location>
        <begin position="265"/>
        <end position="266"/>
    </location>
    <ligand>
        <name>a quinone</name>
        <dbReference type="ChEBI" id="CHEBI:132124"/>
        <label>B</label>
    </ligand>
</feature>
<feature type="binding site" evidence="1">
    <location>
        <position position="273"/>
    </location>
    <ligand>
        <name>Fe cation</name>
        <dbReference type="ChEBI" id="CHEBI:24875"/>
        <note>ligand shared with heterodimeric partner</note>
    </ligand>
</feature>
<feature type="binding site" evidence="1">
    <location>
        <position position="333"/>
    </location>
    <ligand>
        <name>[CaMn4O5] cluster</name>
        <dbReference type="ChEBI" id="CHEBI:189552"/>
    </ligand>
</feature>
<feature type="binding site" evidence="1">
    <location>
        <position position="334"/>
    </location>
    <ligand>
        <name>[CaMn4O5] cluster</name>
        <dbReference type="ChEBI" id="CHEBI:189552"/>
    </ligand>
</feature>
<feature type="binding site" evidence="1">
    <location>
        <position position="343"/>
    </location>
    <ligand>
        <name>[CaMn4O5] cluster</name>
        <dbReference type="ChEBI" id="CHEBI:189552"/>
    </ligand>
</feature>
<feature type="binding site" evidence="1">
    <location>
        <position position="345"/>
    </location>
    <ligand>
        <name>[CaMn4O5] cluster</name>
        <dbReference type="ChEBI" id="CHEBI:189552"/>
    </ligand>
</feature>
<feature type="site" description="Tyrosine radical intermediate" evidence="1">
    <location>
        <position position="162"/>
    </location>
</feature>
<feature type="site" description="Stabilizes free radical intermediate" evidence="1">
    <location>
        <position position="191"/>
    </location>
</feature>
<feature type="site" description="Cleavage; by CtpA" evidence="1">
    <location>
        <begin position="345"/>
        <end position="346"/>
    </location>
</feature>
<organism>
    <name type="scientific">Prochlorococcus marinus (strain MIT 9312)</name>
    <dbReference type="NCBI Taxonomy" id="74546"/>
    <lineage>
        <taxon>Bacteria</taxon>
        <taxon>Bacillati</taxon>
        <taxon>Cyanobacteriota</taxon>
        <taxon>Cyanophyceae</taxon>
        <taxon>Synechococcales</taxon>
        <taxon>Prochlorococcaceae</taxon>
        <taxon>Prochlorococcus</taxon>
    </lineage>
</organism>
<name>PSBA_PROM9</name>
<evidence type="ECO:0000255" key="1">
    <source>
        <dbReference type="HAMAP-Rule" id="MF_01379"/>
    </source>
</evidence>
<evidence type="ECO:0000305" key="2"/>
<dbReference type="EC" id="1.10.3.9" evidence="1"/>
<dbReference type="EMBL" id="CP000111">
    <property type="protein sequence ID" value="ABB49287.1"/>
    <property type="molecule type" value="Genomic_DNA"/>
</dbReference>
<dbReference type="EMBL" id="CP000111">
    <property type="protein sequence ID" value="ABB50203.1"/>
    <property type="molecule type" value="Genomic_DNA"/>
</dbReference>
<dbReference type="RefSeq" id="WP_011375791.1">
    <property type="nucleotide sequence ID" value="NC_007577.1"/>
</dbReference>
<dbReference type="SMR" id="Q31A92"/>
<dbReference type="STRING" id="74546.PMT9312_0225"/>
<dbReference type="KEGG" id="pmi:PMT9312_0225"/>
<dbReference type="KEGG" id="pmi:PMT9312_1144"/>
<dbReference type="eggNOG" id="ENOG502Z87P">
    <property type="taxonomic scope" value="Bacteria"/>
</dbReference>
<dbReference type="HOGENOM" id="CLU_054206_1_0_3"/>
<dbReference type="OrthoDB" id="505356at2"/>
<dbReference type="Proteomes" id="UP000002715">
    <property type="component" value="Chromosome"/>
</dbReference>
<dbReference type="GO" id="GO:0009523">
    <property type="term" value="C:photosystem II"/>
    <property type="evidence" value="ECO:0007669"/>
    <property type="project" value="UniProtKB-KW"/>
</dbReference>
<dbReference type="GO" id="GO:0031676">
    <property type="term" value="C:plasma membrane-derived thylakoid membrane"/>
    <property type="evidence" value="ECO:0007669"/>
    <property type="project" value="UniProtKB-SubCell"/>
</dbReference>
<dbReference type="GO" id="GO:0016168">
    <property type="term" value="F:chlorophyll binding"/>
    <property type="evidence" value="ECO:0007669"/>
    <property type="project" value="UniProtKB-UniRule"/>
</dbReference>
<dbReference type="GO" id="GO:0045156">
    <property type="term" value="F:electron transporter, transferring electrons within the cyclic electron transport pathway of photosynthesis activity"/>
    <property type="evidence" value="ECO:0007669"/>
    <property type="project" value="InterPro"/>
</dbReference>
<dbReference type="GO" id="GO:0005506">
    <property type="term" value="F:iron ion binding"/>
    <property type="evidence" value="ECO:0007669"/>
    <property type="project" value="UniProtKB-UniRule"/>
</dbReference>
<dbReference type="GO" id="GO:0016682">
    <property type="term" value="F:oxidoreductase activity, acting on diphenols and related substances as donors, oxygen as acceptor"/>
    <property type="evidence" value="ECO:0007669"/>
    <property type="project" value="UniProtKB-UniRule"/>
</dbReference>
<dbReference type="GO" id="GO:0010242">
    <property type="term" value="F:oxygen evolving activity"/>
    <property type="evidence" value="ECO:0007669"/>
    <property type="project" value="UniProtKB-EC"/>
</dbReference>
<dbReference type="GO" id="GO:0009772">
    <property type="term" value="P:photosynthetic electron transport in photosystem II"/>
    <property type="evidence" value="ECO:0007669"/>
    <property type="project" value="InterPro"/>
</dbReference>
<dbReference type="GO" id="GO:0009635">
    <property type="term" value="P:response to herbicide"/>
    <property type="evidence" value="ECO:0007669"/>
    <property type="project" value="UniProtKB-KW"/>
</dbReference>
<dbReference type="FunFam" id="1.20.85.10:FF:000002">
    <property type="entry name" value="Photosystem II protein D1"/>
    <property type="match status" value="1"/>
</dbReference>
<dbReference type="Gene3D" id="1.20.85.10">
    <property type="entry name" value="Photosystem II protein D1-like"/>
    <property type="match status" value="1"/>
</dbReference>
<dbReference type="HAMAP" id="MF_01379">
    <property type="entry name" value="PSII_PsbA_D1"/>
    <property type="match status" value="1"/>
</dbReference>
<dbReference type="InterPro" id="IPR055266">
    <property type="entry name" value="D1/D2"/>
</dbReference>
<dbReference type="InterPro" id="IPR036854">
    <property type="entry name" value="Photo_II_D1/D2_sf"/>
</dbReference>
<dbReference type="InterPro" id="IPR000484">
    <property type="entry name" value="Photo_RC_L/M"/>
</dbReference>
<dbReference type="InterPro" id="IPR055265">
    <property type="entry name" value="Photo_RC_L/M_CS"/>
</dbReference>
<dbReference type="InterPro" id="IPR005867">
    <property type="entry name" value="PSII_D1"/>
</dbReference>
<dbReference type="NCBIfam" id="TIGR01151">
    <property type="entry name" value="psbA"/>
    <property type="match status" value="1"/>
</dbReference>
<dbReference type="PANTHER" id="PTHR33149:SF12">
    <property type="entry name" value="PHOTOSYSTEM II D2 PROTEIN"/>
    <property type="match status" value="1"/>
</dbReference>
<dbReference type="PANTHER" id="PTHR33149">
    <property type="entry name" value="PHOTOSYSTEM II PROTEIN D1"/>
    <property type="match status" value="1"/>
</dbReference>
<dbReference type="Pfam" id="PF00124">
    <property type="entry name" value="Photo_RC"/>
    <property type="match status" value="1"/>
</dbReference>
<dbReference type="PRINTS" id="PR00256">
    <property type="entry name" value="REACTNCENTRE"/>
</dbReference>
<dbReference type="SUPFAM" id="SSF81483">
    <property type="entry name" value="Bacterial photosystem II reaction centre, L and M subunits"/>
    <property type="match status" value="1"/>
</dbReference>
<dbReference type="PROSITE" id="PS00244">
    <property type="entry name" value="REACTION_CENTER"/>
    <property type="match status" value="1"/>
</dbReference>
<reference key="1">
    <citation type="journal article" date="2006" name="Science">
        <title>Genomic islands and the ecology and evolution of Prochlorococcus.</title>
        <authorList>
            <person name="Coleman M.L."/>
            <person name="Sullivan M.B."/>
            <person name="Martiny A.C."/>
            <person name="Steglich C."/>
            <person name="Barry K."/>
            <person name="Delong E.F."/>
            <person name="Chisholm S.W."/>
        </authorList>
    </citation>
    <scope>NUCLEOTIDE SEQUENCE [LARGE SCALE GENOMIC DNA]</scope>
    <source>
        <strain>MIT 9312</strain>
    </source>
</reference>
<gene>
    <name evidence="1 2" type="primary">psbA1</name>
    <name type="ordered locus">PMT9312_0225</name>
</gene>
<gene>
    <name evidence="1 2" type="primary">psbA2</name>
    <name type="ordered locus">PMT9312_1144</name>
</gene>
<sequence length="360" mass="39607">MTTIQQQRSSLLKGWPQFCEWVTSTNNRIYVGWFGVLMIPCLLAAAACFIVAFIAAPPVDIDGIREPVAGSFLYGNNIISGAVVPSSNAIGLHFYPIWEAATVDEWLYNGGPYQLVIFHFLIGISAYMGRQWELSYRLGMRPWICVAYSAPVSAAFAVFLVYPFGQGSFSDGMPLGISGTFNFMFVFQAEHNILMHPFHMAGVAGMFGGSLFSAMHGSLVTSSLIRETTETESQNYGYKFGQEEETYNIVAAHGYFGRLIFQYASFNNSRSLHFFLAVFPVVCVWLTSMGICTMAFNLNGFNFNQSVVDANGKIVPTWGDVLNRANLGMEVMHERNAHNFPLDLAAAESTTVALSAPAIG</sequence>